<evidence type="ECO:0000255" key="1">
    <source>
        <dbReference type="HAMAP-Rule" id="MF_00140"/>
    </source>
</evidence>
<comment type="function">
    <text evidence="1">Catalyzes the attachment of tryptophan to tRNA(Trp).</text>
</comment>
<comment type="catalytic activity">
    <reaction evidence="1">
        <text>tRNA(Trp) + L-tryptophan + ATP = L-tryptophyl-tRNA(Trp) + AMP + diphosphate + H(+)</text>
        <dbReference type="Rhea" id="RHEA:24080"/>
        <dbReference type="Rhea" id="RHEA-COMP:9671"/>
        <dbReference type="Rhea" id="RHEA-COMP:9705"/>
        <dbReference type="ChEBI" id="CHEBI:15378"/>
        <dbReference type="ChEBI" id="CHEBI:30616"/>
        <dbReference type="ChEBI" id="CHEBI:33019"/>
        <dbReference type="ChEBI" id="CHEBI:57912"/>
        <dbReference type="ChEBI" id="CHEBI:78442"/>
        <dbReference type="ChEBI" id="CHEBI:78535"/>
        <dbReference type="ChEBI" id="CHEBI:456215"/>
        <dbReference type="EC" id="6.1.1.2"/>
    </reaction>
</comment>
<comment type="subunit">
    <text evidence="1">Homodimer.</text>
</comment>
<comment type="subcellular location">
    <subcellularLocation>
        <location evidence="1">Cytoplasm</location>
    </subcellularLocation>
</comment>
<comment type="similarity">
    <text evidence="1">Belongs to the class-I aminoacyl-tRNA synthetase family.</text>
</comment>
<organism>
    <name type="scientific">Caldanaerobacter subterraneus subsp. tengcongensis (strain DSM 15242 / JCM 11007 / NBRC 100824 / MB4)</name>
    <name type="common">Thermoanaerobacter tengcongensis</name>
    <dbReference type="NCBI Taxonomy" id="273068"/>
    <lineage>
        <taxon>Bacteria</taxon>
        <taxon>Bacillati</taxon>
        <taxon>Bacillota</taxon>
        <taxon>Clostridia</taxon>
        <taxon>Thermoanaerobacterales</taxon>
        <taxon>Thermoanaerobacteraceae</taxon>
        <taxon>Caldanaerobacter</taxon>
    </lineage>
</organism>
<reference key="1">
    <citation type="journal article" date="2002" name="Genome Res.">
        <title>A complete sequence of the T. tengcongensis genome.</title>
        <authorList>
            <person name="Bao Q."/>
            <person name="Tian Y."/>
            <person name="Li W."/>
            <person name="Xu Z."/>
            <person name="Xuan Z."/>
            <person name="Hu S."/>
            <person name="Dong W."/>
            <person name="Yang J."/>
            <person name="Chen Y."/>
            <person name="Xue Y."/>
            <person name="Xu Y."/>
            <person name="Lai X."/>
            <person name="Huang L."/>
            <person name="Dong X."/>
            <person name="Ma Y."/>
            <person name="Ling L."/>
            <person name="Tan H."/>
            <person name="Chen R."/>
            <person name="Wang J."/>
            <person name="Yu J."/>
            <person name="Yang H."/>
        </authorList>
    </citation>
    <scope>NUCLEOTIDE SEQUENCE [LARGE SCALE GENOMIC DNA]</scope>
    <source>
        <strain>DSM 15242 / JCM 11007 / NBRC 100824 / MB4</strain>
    </source>
</reference>
<feature type="chain" id="PRO_0000136700" description="Tryptophan--tRNA ligase">
    <location>
        <begin position="1"/>
        <end position="327"/>
    </location>
</feature>
<feature type="short sequence motif" description="'HIGH' region" evidence="1">
    <location>
        <begin position="10"/>
        <end position="18"/>
    </location>
</feature>
<feature type="short sequence motif" description="'KMSKS' region" evidence="1">
    <location>
        <begin position="192"/>
        <end position="196"/>
    </location>
</feature>
<feature type="binding site" evidence="1">
    <location>
        <begin position="9"/>
        <end position="11"/>
    </location>
    <ligand>
        <name>ATP</name>
        <dbReference type="ChEBI" id="CHEBI:30616"/>
    </ligand>
</feature>
<feature type="binding site" evidence="1">
    <location>
        <begin position="17"/>
        <end position="18"/>
    </location>
    <ligand>
        <name>ATP</name>
        <dbReference type="ChEBI" id="CHEBI:30616"/>
    </ligand>
</feature>
<feature type="binding site" evidence="1">
    <location>
        <position position="132"/>
    </location>
    <ligand>
        <name>L-tryptophan</name>
        <dbReference type="ChEBI" id="CHEBI:57912"/>
    </ligand>
</feature>
<feature type="binding site" evidence="1">
    <location>
        <begin position="144"/>
        <end position="146"/>
    </location>
    <ligand>
        <name>ATP</name>
        <dbReference type="ChEBI" id="CHEBI:30616"/>
    </ligand>
</feature>
<feature type="binding site" evidence="1">
    <location>
        <position position="183"/>
    </location>
    <ligand>
        <name>ATP</name>
        <dbReference type="ChEBI" id="CHEBI:30616"/>
    </ligand>
</feature>
<feature type="binding site" evidence="1">
    <location>
        <begin position="192"/>
        <end position="196"/>
    </location>
    <ligand>
        <name>ATP</name>
        <dbReference type="ChEBI" id="CHEBI:30616"/>
    </ligand>
</feature>
<name>SYW_CALS4</name>
<gene>
    <name evidence="1" type="primary">trpS</name>
    <name type="ordered locus">TTE1453</name>
</gene>
<keyword id="KW-0030">Aminoacyl-tRNA synthetase</keyword>
<keyword id="KW-0067">ATP-binding</keyword>
<keyword id="KW-0963">Cytoplasm</keyword>
<keyword id="KW-0436">Ligase</keyword>
<keyword id="KW-0547">Nucleotide-binding</keyword>
<keyword id="KW-0648">Protein biosynthesis</keyword>
<keyword id="KW-1185">Reference proteome</keyword>
<accession>Q8R9X8</accession>
<sequence length="327" mass="37092">MKRVFSGVQPSGDIHIGNYLGAMRQFVALQDDYDCFFCVVDLHALTVPQDPVELKKNTIELAALYMAIGLDPKKVTLFVQSHVSAHAELAWLLQCITYFGELSRMTQFKEKSKGKESVSVGLFTYPDLMAADILLYKTHYVPVGEDQKQHLELTRDVAQRFNNRFGETFVIPEPMILKFGARIMSLTNPTKKMSKSDADPNNRVNLLDDPDTIYRKIMKAVTDSESEIRLDWEKKPGISNLLTIYSLFTGMEVDEVVNKFKGQGYGTLKKELAEVVIDKLSVIQKNYRDISEEEVLRVLKEGAERAEAVAVETLKEVKEKMGLILRD</sequence>
<protein>
    <recommendedName>
        <fullName evidence="1">Tryptophan--tRNA ligase</fullName>
        <ecNumber evidence="1">6.1.1.2</ecNumber>
    </recommendedName>
    <alternativeName>
        <fullName evidence="1">Tryptophanyl-tRNA synthetase</fullName>
        <shortName evidence="1">TrpRS</shortName>
    </alternativeName>
</protein>
<dbReference type="EC" id="6.1.1.2" evidence="1"/>
<dbReference type="EMBL" id="AE008691">
    <property type="protein sequence ID" value="AAM24675.1"/>
    <property type="molecule type" value="Genomic_DNA"/>
</dbReference>
<dbReference type="RefSeq" id="WP_011025722.1">
    <property type="nucleotide sequence ID" value="NZ_JANUCV010000001.1"/>
</dbReference>
<dbReference type="SMR" id="Q8R9X8"/>
<dbReference type="STRING" id="273068.TTE1453"/>
<dbReference type="KEGG" id="tte:TTE1453"/>
<dbReference type="eggNOG" id="COG0180">
    <property type="taxonomic scope" value="Bacteria"/>
</dbReference>
<dbReference type="HOGENOM" id="CLU_029244_1_1_9"/>
<dbReference type="OrthoDB" id="9801042at2"/>
<dbReference type="Proteomes" id="UP000000555">
    <property type="component" value="Chromosome"/>
</dbReference>
<dbReference type="GO" id="GO:0005829">
    <property type="term" value="C:cytosol"/>
    <property type="evidence" value="ECO:0007669"/>
    <property type="project" value="TreeGrafter"/>
</dbReference>
<dbReference type="GO" id="GO:0005524">
    <property type="term" value="F:ATP binding"/>
    <property type="evidence" value="ECO:0007669"/>
    <property type="project" value="UniProtKB-UniRule"/>
</dbReference>
<dbReference type="GO" id="GO:0004830">
    <property type="term" value="F:tryptophan-tRNA ligase activity"/>
    <property type="evidence" value="ECO:0007669"/>
    <property type="project" value="UniProtKB-UniRule"/>
</dbReference>
<dbReference type="GO" id="GO:0006436">
    <property type="term" value="P:tryptophanyl-tRNA aminoacylation"/>
    <property type="evidence" value="ECO:0007669"/>
    <property type="project" value="UniProtKB-UniRule"/>
</dbReference>
<dbReference type="CDD" id="cd00806">
    <property type="entry name" value="TrpRS_core"/>
    <property type="match status" value="1"/>
</dbReference>
<dbReference type="FunFam" id="1.10.240.10:FF:000002">
    <property type="entry name" value="Tryptophan--tRNA ligase"/>
    <property type="match status" value="1"/>
</dbReference>
<dbReference type="Gene3D" id="3.40.50.620">
    <property type="entry name" value="HUPs"/>
    <property type="match status" value="1"/>
</dbReference>
<dbReference type="Gene3D" id="1.10.240.10">
    <property type="entry name" value="Tyrosyl-Transfer RNA Synthetase"/>
    <property type="match status" value="1"/>
</dbReference>
<dbReference type="HAMAP" id="MF_00140_B">
    <property type="entry name" value="Trp_tRNA_synth_B"/>
    <property type="match status" value="1"/>
</dbReference>
<dbReference type="InterPro" id="IPR001412">
    <property type="entry name" value="aa-tRNA-synth_I_CS"/>
</dbReference>
<dbReference type="InterPro" id="IPR002305">
    <property type="entry name" value="aa-tRNA-synth_Ic"/>
</dbReference>
<dbReference type="InterPro" id="IPR014729">
    <property type="entry name" value="Rossmann-like_a/b/a_fold"/>
</dbReference>
<dbReference type="InterPro" id="IPR002306">
    <property type="entry name" value="Trp-tRNA-ligase"/>
</dbReference>
<dbReference type="InterPro" id="IPR024109">
    <property type="entry name" value="Trp-tRNA-ligase_bac-type"/>
</dbReference>
<dbReference type="InterPro" id="IPR050203">
    <property type="entry name" value="Trp-tRNA_synthetase"/>
</dbReference>
<dbReference type="NCBIfam" id="TIGR00233">
    <property type="entry name" value="trpS"/>
    <property type="match status" value="1"/>
</dbReference>
<dbReference type="PANTHER" id="PTHR43766">
    <property type="entry name" value="TRYPTOPHAN--TRNA LIGASE, MITOCHONDRIAL"/>
    <property type="match status" value="1"/>
</dbReference>
<dbReference type="PANTHER" id="PTHR43766:SF1">
    <property type="entry name" value="TRYPTOPHAN--TRNA LIGASE, MITOCHONDRIAL"/>
    <property type="match status" value="1"/>
</dbReference>
<dbReference type="Pfam" id="PF00579">
    <property type="entry name" value="tRNA-synt_1b"/>
    <property type="match status" value="1"/>
</dbReference>
<dbReference type="PRINTS" id="PR01039">
    <property type="entry name" value="TRNASYNTHTRP"/>
</dbReference>
<dbReference type="SUPFAM" id="SSF52374">
    <property type="entry name" value="Nucleotidylyl transferase"/>
    <property type="match status" value="1"/>
</dbReference>
<dbReference type="PROSITE" id="PS00178">
    <property type="entry name" value="AA_TRNA_LIGASE_I"/>
    <property type="match status" value="1"/>
</dbReference>
<proteinExistence type="inferred from homology"/>